<reference key="1">
    <citation type="journal article" date="2006" name="J. Bacteriol.">
        <title>Whole-genome sequence of Listeria welshimeri reveals common steps in genome reduction with Listeria innocua as compared to Listeria monocytogenes.</title>
        <authorList>
            <person name="Hain T."/>
            <person name="Steinweg C."/>
            <person name="Kuenne C.T."/>
            <person name="Billion A."/>
            <person name="Ghai R."/>
            <person name="Chatterjee S.S."/>
            <person name="Domann E."/>
            <person name="Kaerst U."/>
            <person name="Goesmann A."/>
            <person name="Bekel T."/>
            <person name="Bartels D."/>
            <person name="Kaiser O."/>
            <person name="Meyer F."/>
            <person name="Puehler A."/>
            <person name="Weisshaar B."/>
            <person name="Wehland J."/>
            <person name="Liang C."/>
            <person name="Dandekar T."/>
            <person name="Lampidis R."/>
            <person name="Kreft J."/>
            <person name="Goebel W."/>
            <person name="Chakraborty T."/>
        </authorList>
    </citation>
    <scope>NUCLEOTIDE SEQUENCE [LARGE SCALE GENOMIC DNA]</scope>
    <source>
        <strain>ATCC 35897 / DSM 20650 / CCUG 15529 / CIP 8149 / NCTC 11857 / SLCC 5334 / V8</strain>
    </source>
</reference>
<protein>
    <recommendedName>
        <fullName evidence="1">Arginine deiminase</fullName>
        <shortName evidence="1">ADI</shortName>
        <ecNumber evidence="1">3.5.3.6</ecNumber>
    </recommendedName>
    <alternativeName>
        <fullName evidence="1">Arginine dihydrolase</fullName>
        <shortName evidence="1">AD</shortName>
    </alternativeName>
</protein>
<gene>
    <name evidence="1" type="primary">arcA</name>
    <name type="ordered locus">lwe0034</name>
</gene>
<comment type="catalytic activity">
    <reaction evidence="1">
        <text>L-arginine + H2O = L-citrulline + NH4(+)</text>
        <dbReference type="Rhea" id="RHEA:19597"/>
        <dbReference type="ChEBI" id="CHEBI:15377"/>
        <dbReference type="ChEBI" id="CHEBI:28938"/>
        <dbReference type="ChEBI" id="CHEBI:32682"/>
        <dbReference type="ChEBI" id="CHEBI:57743"/>
        <dbReference type="EC" id="3.5.3.6"/>
    </reaction>
</comment>
<comment type="pathway">
    <text evidence="1">Amino-acid degradation; L-arginine degradation via ADI pathway; carbamoyl phosphate from L-arginine: step 1/2.</text>
</comment>
<comment type="subcellular location">
    <subcellularLocation>
        <location evidence="1">Cytoplasm</location>
    </subcellularLocation>
</comment>
<comment type="similarity">
    <text evidence="1">Belongs to the arginine deiminase family.</text>
</comment>
<evidence type="ECO:0000255" key="1">
    <source>
        <dbReference type="HAMAP-Rule" id="MF_00242"/>
    </source>
</evidence>
<name>ARCA_LISW6</name>
<accession>A0AEM0</accession>
<keyword id="KW-0056">Arginine metabolism</keyword>
<keyword id="KW-0963">Cytoplasm</keyword>
<keyword id="KW-0378">Hydrolase</keyword>
<organism>
    <name type="scientific">Listeria welshimeri serovar 6b (strain ATCC 35897 / DSM 20650 / CCUG 15529 / CIP 8149 / NCTC 11857 / SLCC 5334 / V8)</name>
    <dbReference type="NCBI Taxonomy" id="386043"/>
    <lineage>
        <taxon>Bacteria</taxon>
        <taxon>Bacillati</taxon>
        <taxon>Bacillota</taxon>
        <taxon>Bacilli</taxon>
        <taxon>Bacillales</taxon>
        <taxon>Listeriaceae</taxon>
        <taxon>Listeria</taxon>
    </lineage>
</organism>
<proteinExistence type="inferred from homology"/>
<feature type="chain" id="PRO_1000005716" description="Arginine deiminase">
    <location>
        <begin position="1"/>
        <end position="407"/>
    </location>
</feature>
<feature type="active site" description="Amidino-cysteine intermediate" evidence="1">
    <location>
        <position position="397"/>
    </location>
</feature>
<sequence>MEKALNITSEIGKLQTVLVKRPGSELENITPEYLESLLFDDIPYLKMMQKEHDFFVKRMQDSNIEVLYLEKLAAEALRKAGNKETFLTKMINESNQMDESALYVRDYLMSFNEEEMIRKLMAGLKKSEIPERKKKHLNEMMSEQYPFFLDPLPNLYFTRDPAAVIGSGVTINKMFQPARRRESIFIELILKHHPRFSNQEVPIWSGREEPFSLEGGDELVLNEETVIVGVSERTDARAVERLAESLFARAPKIKKVLAVEIPETRSFMHLDTVFTMVSDAQFTIHPAIQNQQGELNVYILEKGKNGLEITPRRDFRRVIAEVLEVPEVEFIPCGGEDVIVSAREQWNDGANTLAIAPGEVITYDRNQVSNDLLRRAGIKVHEVISSELSRGRGGPRCMTMPLVRENL</sequence>
<dbReference type="EC" id="3.5.3.6" evidence="1"/>
<dbReference type="EMBL" id="AM263198">
    <property type="protein sequence ID" value="CAK19452.1"/>
    <property type="molecule type" value="Genomic_DNA"/>
</dbReference>
<dbReference type="SMR" id="A0AEM0"/>
<dbReference type="STRING" id="386043.lwe0034"/>
<dbReference type="KEGG" id="lwe:lwe0034"/>
<dbReference type="eggNOG" id="COG2235">
    <property type="taxonomic scope" value="Bacteria"/>
</dbReference>
<dbReference type="HOGENOM" id="CLU_052662_0_1_9"/>
<dbReference type="UniPathway" id="UPA00254">
    <property type="reaction ID" value="UER00364"/>
</dbReference>
<dbReference type="Proteomes" id="UP000000779">
    <property type="component" value="Chromosome"/>
</dbReference>
<dbReference type="GO" id="GO:0005737">
    <property type="term" value="C:cytoplasm"/>
    <property type="evidence" value="ECO:0007669"/>
    <property type="project" value="UniProtKB-SubCell"/>
</dbReference>
<dbReference type="GO" id="GO:0016990">
    <property type="term" value="F:arginine deiminase activity"/>
    <property type="evidence" value="ECO:0007669"/>
    <property type="project" value="UniProtKB-UniRule"/>
</dbReference>
<dbReference type="GO" id="GO:0019547">
    <property type="term" value="P:arginine catabolic process to ornithine"/>
    <property type="evidence" value="ECO:0007669"/>
    <property type="project" value="UniProtKB-UniRule"/>
</dbReference>
<dbReference type="GO" id="GO:0019546">
    <property type="term" value="P:arginine deiminase pathway"/>
    <property type="evidence" value="ECO:0007669"/>
    <property type="project" value="TreeGrafter"/>
</dbReference>
<dbReference type="Gene3D" id="1.10.3930.10">
    <property type="entry name" value="Arginine deiminase"/>
    <property type="match status" value="1"/>
</dbReference>
<dbReference type="Gene3D" id="3.75.10.10">
    <property type="entry name" value="L-arginine/glycine Amidinotransferase, Chain A"/>
    <property type="match status" value="1"/>
</dbReference>
<dbReference type="HAMAP" id="MF_00242">
    <property type="entry name" value="Arg_deiminase"/>
    <property type="match status" value="1"/>
</dbReference>
<dbReference type="InterPro" id="IPR003876">
    <property type="entry name" value="Arg_deiminase"/>
</dbReference>
<dbReference type="NCBIfam" id="TIGR01078">
    <property type="entry name" value="arcA"/>
    <property type="match status" value="1"/>
</dbReference>
<dbReference type="NCBIfam" id="NF002381">
    <property type="entry name" value="PRK01388.1"/>
    <property type="match status" value="1"/>
</dbReference>
<dbReference type="PANTHER" id="PTHR47271">
    <property type="entry name" value="ARGININE DEIMINASE"/>
    <property type="match status" value="1"/>
</dbReference>
<dbReference type="PANTHER" id="PTHR47271:SF2">
    <property type="entry name" value="ARGININE DEIMINASE"/>
    <property type="match status" value="1"/>
</dbReference>
<dbReference type="Pfam" id="PF02274">
    <property type="entry name" value="ADI"/>
    <property type="match status" value="1"/>
</dbReference>
<dbReference type="PIRSF" id="PIRSF006356">
    <property type="entry name" value="Arg_deiminase"/>
    <property type="match status" value="1"/>
</dbReference>
<dbReference type="PRINTS" id="PR01466">
    <property type="entry name" value="ARGDEIMINASE"/>
</dbReference>
<dbReference type="SUPFAM" id="SSF55909">
    <property type="entry name" value="Pentein"/>
    <property type="match status" value="1"/>
</dbReference>